<comment type="function">
    <text evidence="9">Component of the ribosome, a large ribonucleoprotein complex responsible for the synthesis of proteins in the cell. The small ribosomal subunit (SSU) binds messenger RNAs (mRNAs) and translates the encoded message by selecting cognate aminoacyl-transfer RNA (tRNA) molecules. The large subunit (LSU) contains the ribosomal catalytic site termed the peptidyl transferase center (PTC), which catalyzes the formation of peptide bonds, thereby polymerizing the amino acids delivered by tRNAs into a polypeptide chain. The nascent polypeptides leave the ribosome through a tunnel in the LSU and interact with protein factors that function in enzymatic processing, targeting, and the membrane insertion of nascent chains at the exit of the ribosomal tunnel.</text>
</comment>
<comment type="subunit">
    <text evidence="5 10">Component of the large ribosomal subunit (LSU). Mature yeast ribosomes consist of a small (40S) and a large (60S) subunit. The 40S small subunit contains 1 molecule of ribosomal RNA (18S rRNA) and 33 different proteins (encoded by 57 genes). The large 60S subunit contains 3 rRNA molecules (25S, 5.8S and 5S rRNA) and 46 different proteins (encoded by 81 genes) (PubMed:22096102, PubMed:9559554).</text>
</comment>
<comment type="interaction">
    <interactant intactId="EBI-14624">
        <id>O14455</id>
    </interactant>
    <interactant intactId="EBI-27427">
        <id>Q04322</id>
        <label>GYL1</label>
    </interactant>
    <organismsDiffer>false</organismsDiffer>
    <experiments>2</experiments>
</comment>
<comment type="subcellular location">
    <subcellularLocation>
        <location evidence="2 5">Cytoplasm</location>
    </subcellularLocation>
</comment>
<comment type="miscellaneous">
    <text evidence="3">Present with 5370 molecules/cell in log phase SD medium.</text>
</comment>
<comment type="miscellaneous">
    <text evidence="8">There are 2 genes for eL36 in yeast.</text>
</comment>
<comment type="similarity">
    <text evidence="8">Belongs to the eukaryotic ribosomal protein eL36 family.</text>
</comment>
<proteinExistence type="evidence at protein level"/>
<evidence type="ECO:0000269" key="1">
    <source>
    </source>
</evidence>
<evidence type="ECO:0000269" key="2">
    <source>
    </source>
</evidence>
<evidence type="ECO:0000269" key="3">
    <source>
    </source>
</evidence>
<evidence type="ECO:0000269" key="4">
    <source>
    </source>
</evidence>
<evidence type="ECO:0000269" key="5">
    <source>
    </source>
</evidence>
<evidence type="ECO:0000303" key="6">
    <source>
    </source>
</evidence>
<evidence type="ECO:0000303" key="7">
    <source>
    </source>
</evidence>
<evidence type="ECO:0000305" key="8"/>
<evidence type="ECO:0000305" key="9">
    <source>
    </source>
</evidence>
<evidence type="ECO:0000305" key="10">
    <source>
    </source>
</evidence>
<evidence type="ECO:0007829" key="11">
    <source>
        <dbReference type="PDB" id="6EM3"/>
    </source>
</evidence>
<feature type="initiator methionine" description="Removed" evidence="1 4">
    <location>
        <position position="1"/>
    </location>
</feature>
<feature type="chain" id="PRO_0000195021" description="Large ribosomal subunit protein eL36B">
    <location>
        <begin position="2"/>
        <end position="100"/>
    </location>
</feature>
<feature type="sequence conflict" description="In Ref. 3; AA sequence." evidence="8" ref="3">
    <original>N</original>
    <variation>D</variation>
    <location>
        <position position="35"/>
    </location>
</feature>
<feature type="helix" evidence="11">
    <location>
        <begin position="35"/>
        <end position="47"/>
    </location>
</feature>
<feature type="helix" evidence="11">
    <location>
        <begin position="52"/>
        <end position="76"/>
    </location>
</feature>
<feature type="helix" evidence="11">
    <location>
        <begin position="80"/>
        <end position="99"/>
    </location>
</feature>
<protein>
    <recommendedName>
        <fullName evidence="6">Large ribosomal subunit protein eL36B</fullName>
    </recommendedName>
    <alternativeName>
        <fullName evidence="7">60S ribosomal protein L36-B</fullName>
    </alternativeName>
    <alternativeName>
        <fullName>L39</fullName>
    </alternativeName>
    <alternativeName>
        <fullName>YL39</fullName>
    </alternativeName>
</protein>
<dbReference type="EMBL" id="Z73605">
    <property type="protein sequence ID" value="CAA97971.1"/>
    <property type="molecule type" value="Genomic_DNA"/>
</dbReference>
<dbReference type="EMBL" id="Z73606">
    <property type="protein sequence ID" value="CAA97973.1"/>
    <property type="molecule type" value="Genomic_DNA"/>
</dbReference>
<dbReference type="EMBL" id="BK006949">
    <property type="protein sequence ID" value="DAA11187.1"/>
    <property type="molecule type" value="Genomic_DNA"/>
</dbReference>
<dbReference type="PIR" id="S72661">
    <property type="entry name" value="S72661"/>
</dbReference>
<dbReference type="RefSeq" id="NP_015074.1">
    <property type="nucleotide sequence ID" value="NM_001184312.1"/>
</dbReference>
<dbReference type="PDB" id="6EM1">
    <property type="method" value="EM"/>
    <property type="resolution" value="3.60 A"/>
    <property type="chains" value="i=1-100"/>
</dbReference>
<dbReference type="PDB" id="6EM3">
    <property type="method" value="EM"/>
    <property type="resolution" value="3.20 A"/>
    <property type="chains" value="i=1-100"/>
</dbReference>
<dbReference type="PDB" id="6EM4">
    <property type="method" value="EM"/>
    <property type="resolution" value="4.10 A"/>
    <property type="chains" value="i=1-100"/>
</dbReference>
<dbReference type="PDB" id="6EM5">
    <property type="method" value="EM"/>
    <property type="resolution" value="4.30 A"/>
    <property type="chains" value="i=1-100"/>
</dbReference>
<dbReference type="PDBsum" id="6EM1"/>
<dbReference type="PDBsum" id="6EM3"/>
<dbReference type="PDBsum" id="6EM4"/>
<dbReference type="PDBsum" id="6EM5"/>
<dbReference type="SMR" id="O14455"/>
<dbReference type="BioGRID" id="35913">
    <property type="interactions" value="163"/>
</dbReference>
<dbReference type="ComplexPortal" id="CPX-1601">
    <property type="entry name" value="60S cytosolic large ribosomal subunit"/>
</dbReference>
<dbReference type="DIP" id="DIP-2577N"/>
<dbReference type="FunCoup" id="O14455">
    <property type="interactions" value="990"/>
</dbReference>
<dbReference type="IntAct" id="O14455">
    <property type="interactions" value="83"/>
</dbReference>
<dbReference type="MINT" id="O14455"/>
<dbReference type="STRING" id="4932.YPL249C-A"/>
<dbReference type="CarbonylDB" id="O14455"/>
<dbReference type="iPTMnet" id="O14455"/>
<dbReference type="PaxDb" id="4932-YPL249C-A"/>
<dbReference type="PeptideAtlas" id="O14455"/>
<dbReference type="TopDownProteomics" id="O14455"/>
<dbReference type="EnsemblFungi" id="YPL249C-A_mRNA">
    <property type="protein sequence ID" value="YPL249C-A"/>
    <property type="gene ID" value="YPL249C-A"/>
</dbReference>
<dbReference type="GeneID" id="855826"/>
<dbReference type="KEGG" id="sce:YPL249C-A"/>
<dbReference type="AGR" id="SGD:S000006438"/>
<dbReference type="SGD" id="S000006438">
    <property type="gene designation" value="RPL36B"/>
</dbReference>
<dbReference type="VEuPathDB" id="FungiDB:YPL249C-A"/>
<dbReference type="eggNOG" id="KOG3452">
    <property type="taxonomic scope" value="Eukaryota"/>
</dbReference>
<dbReference type="GeneTree" id="ENSGT00940000169339"/>
<dbReference type="HOGENOM" id="CLU_140672_1_0_1"/>
<dbReference type="InParanoid" id="O14455"/>
<dbReference type="OMA" id="NKGHKTE"/>
<dbReference type="OrthoDB" id="9616667at2759"/>
<dbReference type="BioCyc" id="YEAST:G3O-34326-MONOMER"/>
<dbReference type="Reactome" id="R-SCE-156827">
    <property type="pathway name" value="L13a-mediated translational silencing of Ceruloplasmin expression"/>
</dbReference>
<dbReference type="Reactome" id="R-SCE-1799339">
    <property type="pathway name" value="SRP-dependent cotranslational protein targeting to membrane"/>
</dbReference>
<dbReference type="Reactome" id="R-SCE-72689">
    <property type="pathway name" value="Formation of a pool of free 40S subunits"/>
</dbReference>
<dbReference type="Reactome" id="R-SCE-72706">
    <property type="pathway name" value="GTP hydrolysis and joining of the 60S ribosomal subunit"/>
</dbReference>
<dbReference type="Reactome" id="R-SCE-975956">
    <property type="pathway name" value="Nonsense Mediated Decay (NMD) independent of the Exon Junction Complex (EJC)"/>
</dbReference>
<dbReference type="Reactome" id="R-SCE-975957">
    <property type="pathway name" value="Nonsense Mediated Decay (NMD) enhanced by the Exon Junction Complex (EJC)"/>
</dbReference>
<dbReference type="BioGRID-ORCS" id="855826">
    <property type="hits" value="2 hits in 10 CRISPR screens"/>
</dbReference>
<dbReference type="PRO" id="PR:O14455"/>
<dbReference type="Proteomes" id="UP000002311">
    <property type="component" value="Chromosome XVI"/>
</dbReference>
<dbReference type="RNAct" id="O14455">
    <property type="molecule type" value="protein"/>
</dbReference>
<dbReference type="GO" id="GO:0005829">
    <property type="term" value="C:cytosol"/>
    <property type="evidence" value="ECO:0000304"/>
    <property type="project" value="Reactome"/>
</dbReference>
<dbReference type="GO" id="GO:0022625">
    <property type="term" value="C:cytosolic large ribosomal subunit"/>
    <property type="evidence" value="ECO:0000314"/>
    <property type="project" value="SGD"/>
</dbReference>
<dbReference type="GO" id="GO:0003723">
    <property type="term" value="F:RNA binding"/>
    <property type="evidence" value="ECO:0000314"/>
    <property type="project" value="SGD"/>
</dbReference>
<dbReference type="GO" id="GO:0003735">
    <property type="term" value="F:structural constituent of ribosome"/>
    <property type="evidence" value="ECO:0000314"/>
    <property type="project" value="SGD"/>
</dbReference>
<dbReference type="GO" id="GO:0002181">
    <property type="term" value="P:cytoplasmic translation"/>
    <property type="evidence" value="ECO:0000314"/>
    <property type="project" value="SGD"/>
</dbReference>
<dbReference type="FunFam" id="1.10.10.1760:FF:000003">
    <property type="entry name" value="60S ribosomal protein L36"/>
    <property type="match status" value="1"/>
</dbReference>
<dbReference type="Gene3D" id="1.10.10.1760">
    <property type="entry name" value="60S ribosomal protein L36"/>
    <property type="match status" value="1"/>
</dbReference>
<dbReference type="InterPro" id="IPR000509">
    <property type="entry name" value="Ribosomal_eL36"/>
</dbReference>
<dbReference type="InterPro" id="IPR038097">
    <property type="entry name" value="Ribosomal_eL36_sf"/>
</dbReference>
<dbReference type="PANTHER" id="PTHR10114">
    <property type="entry name" value="60S RIBOSOMAL PROTEIN L36"/>
    <property type="match status" value="1"/>
</dbReference>
<dbReference type="Pfam" id="PF01158">
    <property type="entry name" value="Ribosomal_L36e"/>
    <property type="match status" value="1"/>
</dbReference>
<dbReference type="PROSITE" id="PS01190">
    <property type="entry name" value="RIBOSOMAL_L36E"/>
    <property type="match status" value="1"/>
</dbReference>
<name>RL36B_YEAST</name>
<organism>
    <name type="scientific">Saccharomyces cerevisiae (strain ATCC 204508 / S288c)</name>
    <name type="common">Baker's yeast</name>
    <dbReference type="NCBI Taxonomy" id="559292"/>
    <lineage>
        <taxon>Eukaryota</taxon>
        <taxon>Fungi</taxon>
        <taxon>Dikarya</taxon>
        <taxon>Ascomycota</taxon>
        <taxon>Saccharomycotina</taxon>
        <taxon>Saccharomycetes</taxon>
        <taxon>Saccharomycetales</taxon>
        <taxon>Saccharomycetaceae</taxon>
        <taxon>Saccharomyces</taxon>
    </lineage>
</organism>
<reference key="1">
    <citation type="journal article" date="1997" name="Nature">
        <title>The nucleotide sequence of Saccharomyces cerevisiae chromosome XVI.</title>
        <authorList>
            <person name="Bussey H."/>
            <person name="Storms R.K."/>
            <person name="Ahmed A."/>
            <person name="Albermann K."/>
            <person name="Allen E."/>
            <person name="Ansorge W."/>
            <person name="Araujo R."/>
            <person name="Aparicio A."/>
            <person name="Barrell B.G."/>
            <person name="Badcock K."/>
            <person name="Benes V."/>
            <person name="Botstein D."/>
            <person name="Bowman S."/>
            <person name="Brueckner M."/>
            <person name="Carpenter J."/>
            <person name="Cherry J.M."/>
            <person name="Chung E."/>
            <person name="Churcher C.M."/>
            <person name="Coster F."/>
            <person name="Davis K."/>
            <person name="Davis R.W."/>
            <person name="Dietrich F.S."/>
            <person name="Delius H."/>
            <person name="DiPaolo T."/>
            <person name="Dubois E."/>
            <person name="Duesterhoeft A."/>
            <person name="Duncan M."/>
            <person name="Floeth M."/>
            <person name="Fortin N."/>
            <person name="Friesen J.D."/>
            <person name="Fritz C."/>
            <person name="Goffeau A."/>
            <person name="Hall J."/>
            <person name="Hebling U."/>
            <person name="Heumann K."/>
            <person name="Hilbert H."/>
            <person name="Hillier L.W."/>
            <person name="Hunicke-Smith S."/>
            <person name="Hyman R.W."/>
            <person name="Johnston M."/>
            <person name="Kalman S."/>
            <person name="Kleine K."/>
            <person name="Komp C."/>
            <person name="Kurdi O."/>
            <person name="Lashkari D."/>
            <person name="Lew H."/>
            <person name="Lin A."/>
            <person name="Lin D."/>
            <person name="Louis E.J."/>
            <person name="Marathe R."/>
            <person name="Messenguy F."/>
            <person name="Mewes H.-W."/>
            <person name="Mirtipati S."/>
            <person name="Moestl D."/>
            <person name="Mueller-Auer S."/>
            <person name="Namath A."/>
            <person name="Nentwich U."/>
            <person name="Oefner P."/>
            <person name="Pearson D."/>
            <person name="Petel F.X."/>
            <person name="Pohl T.M."/>
            <person name="Purnelle B."/>
            <person name="Rajandream M.A."/>
            <person name="Rechmann S."/>
            <person name="Rieger M."/>
            <person name="Riles L."/>
            <person name="Roberts D."/>
            <person name="Schaefer M."/>
            <person name="Scharfe M."/>
            <person name="Scherens B."/>
            <person name="Schramm S."/>
            <person name="Schroeder M."/>
            <person name="Sdicu A.-M."/>
            <person name="Tettelin H."/>
            <person name="Urrestarazu L.A."/>
            <person name="Ushinsky S."/>
            <person name="Vierendeels F."/>
            <person name="Vissers S."/>
            <person name="Voss H."/>
            <person name="Walsh S.V."/>
            <person name="Wambutt R."/>
            <person name="Wang Y."/>
            <person name="Wedler E."/>
            <person name="Wedler H."/>
            <person name="Winnett E."/>
            <person name="Zhong W.-W."/>
            <person name="Zollner A."/>
            <person name="Vo D.H."/>
            <person name="Hani J."/>
        </authorList>
    </citation>
    <scope>NUCLEOTIDE SEQUENCE [LARGE SCALE GENOMIC DNA]</scope>
    <source>
        <strain>ATCC 204508 / S288c</strain>
    </source>
</reference>
<reference key="2">
    <citation type="journal article" date="2014" name="G3 (Bethesda)">
        <title>The reference genome sequence of Saccharomyces cerevisiae: Then and now.</title>
        <authorList>
            <person name="Engel S.R."/>
            <person name="Dietrich F.S."/>
            <person name="Fisk D.G."/>
            <person name="Binkley G."/>
            <person name="Balakrishnan R."/>
            <person name="Costanzo M.C."/>
            <person name="Dwight S.S."/>
            <person name="Hitz B.C."/>
            <person name="Karra K."/>
            <person name="Nash R.S."/>
            <person name="Weng S."/>
            <person name="Wong E.D."/>
            <person name="Lloyd P."/>
            <person name="Skrzypek M.S."/>
            <person name="Miyasato S.R."/>
            <person name="Simison M."/>
            <person name="Cherry J.M."/>
        </authorList>
    </citation>
    <scope>GENOME REANNOTATION</scope>
    <source>
        <strain>ATCC 204508 / S288c</strain>
    </source>
</reference>
<reference key="3">
    <citation type="journal article" date="1984" name="Mol. Gen. Genet.">
        <title>Yeast ribosomal proteins. VIII. Isolation of two proteins and sequence characterization of twenty-four proteins from cytoplasmic ribosomes.</title>
        <authorList>
            <person name="Otaka E."/>
            <person name="Higo K."/>
            <person name="Itoh T."/>
        </authorList>
    </citation>
    <scope>PROTEIN SEQUENCE OF 2-41</scope>
    <scope>CLEAVAGE OF INITIATOR METHIONINE</scope>
</reference>
<reference key="4">
    <citation type="journal article" date="1998" name="Yeast">
        <title>The list of cytoplasmic ribosomal proteins of Saccharomyces cerevisiae.</title>
        <authorList>
            <person name="Planta R.J."/>
            <person name="Mager W.H."/>
        </authorList>
    </citation>
    <scope>NOMENCLATURE</scope>
    <scope>SUBUNIT</scope>
</reference>
<reference key="5">
    <citation type="journal article" date="1999" name="J. Biol. Chem.">
        <title>The action of N-terminal acetyltransferases on yeast ribosomal proteins.</title>
        <authorList>
            <person name="Arnold R.J."/>
            <person name="Polevoda B."/>
            <person name="Reilly J.P."/>
            <person name="Sherman F."/>
        </authorList>
    </citation>
    <scope>CLEAVAGE OF INITIATOR METHIONINE</scope>
</reference>
<reference key="6">
    <citation type="journal article" date="2003" name="Nature">
        <title>Global analysis of protein localization in budding yeast.</title>
        <authorList>
            <person name="Huh W.-K."/>
            <person name="Falvo J.V."/>
            <person name="Gerke L.C."/>
            <person name="Carroll A.S."/>
            <person name="Howson R.W."/>
            <person name="Weissman J.S."/>
            <person name="O'Shea E.K."/>
        </authorList>
    </citation>
    <scope>SUBCELLULAR LOCATION [LARGE SCALE ANALYSIS]</scope>
</reference>
<reference key="7">
    <citation type="journal article" date="2003" name="Nature">
        <title>Global analysis of protein expression in yeast.</title>
        <authorList>
            <person name="Ghaemmaghami S."/>
            <person name="Huh W.-K."/>
            <person name="Bower K."/>
            <person name="Howson R.W."/>
            <person name="Belle A."/>
            <person name="Dephoure N."/>
            <person name="O'Shea E.K."/>
            <person name="Weissman J.S."/>
        </authorList>
    </citation>
    <scope>LEVEL OF PROTEIN EXPRESSION [LARGE SCALE ANALYSIS]</scope>
</reference>
<reference key="8">
    <citation type="journal article" date="2011" name="Science">
        <title>The structure of the eukaryotic ribosome at 3.0 A resolution.</title>
        <authorList>
            <person name="Ben-Shem A."/>
            <person name="Garreau de Loubresse N."/>
            <person name="Melnikov S."/>
            <person name="Jenner L."/>
            <person name="Yusupova G."/>
            <person name="Yusupov M."/>
        </authorList>
    </citation>
    <scope>SUBUNIT</scope>
    <scope>SUBCELLULAR LOCATION</scope>
</reference>
<reference key="9">
    <citation type="journal article" date="2014" name="Curr. Opin. Struct. Biol.">
        <title>A new system for naming ribosomal proteins.</title>
        <authorList>
            <person name="Ban N."/>
            <person name="Beckmann R."/>
            <person name="Cate J.H.D."/>
            <person name="Dinman J.D."/>
            <person name="Dragon F."/>
            <person name="Ellis S.R."/>
            <person name="Lafontaine D.L.J."/>
            <person name="Lindahl L."/>
            <person name="Liljas A."/>
            <person name="Lipton J.M."/>
            <person name="McAlear M.A."/>
            <person name="Moore P.B."/>
            <person name="Noller H.F."/>
            <person name="Ortega J."/>
            <person name="Panse V.G."/>
            <person name="Ramakrishnan V."/>
            <person name="Spahn C.M.T."/>
            <person name="Steitz T.A."/>
            <person name="Tchorzewski M."/>
            <person name="Tollervey D."/>
            <person name="Warren A.J."/>
            <person name="Williamson J.R."/>
            <person name="Wilson D."/>
            <person name="Yonath A."/>
            <person name="Yusupov M."/>
        </authorList>
    </citation>
    <scope>NOMENCLATURE</scope>
</reference>
<gene>
    <name evidence="7" type="primary">RPL36B</name>
    <name type="synonym">RPL39B</name>
    <name type="ordered locus">YPL249C-A</name>
    <name type="ORF">YPL249BC</name>
</gene>
<keyword id="KW-0002">3D-structure</keyword>
<keyword id="KW-0963">Cytoplasm</keyword>
<keyword id="KW-0903">Direct protein sequencing</keyword>
<keyword id="KW-1185">Reference proteome</keyword>
<keyword id="KW-0687">Ribonucleoprotein</keyword>
<keyword id="KW-0689">Ribosomal protein</keyword>
<sequence>MAVKTGIAIGLNKGKKVTQMTPAPKISYKKGAASNRTKFVRSLVREIAGLSPYERRLIDLIRNSGEKRARKVAKKRLGSFTRAKAKVEEMNNIIAASRRH</sequence>
<accession>O14455</accession>
<accession>D6W3C1</accession>